<evidence type="ECO:0000255" key="1">
    <source>
        <dbReference type="HAMAP-Rule" id="MF_00406"/>
    </source>
</evidence>
<accession>Q7NVY3</accession>
<reference key="1">
    <citation type="journal article" date="2003" name="Proc. Natl. Acad. Sci. U.S.A.">
        <title>The complete genome sequence of Chromobacterium violaceum reveals remarkable and exploitable bacterial adaptability.</title>
        <authorList>
            <person name="Vasconcelos A.T.R."/>
            <person name="de Almeida D.F."/>
            <person name="Hungria M."/>
            <person name="Guimaraes C.T."/>
            <person name="Antonio R.V."/>
            <person name="Almeida F.C."/>
            <person name="de Almeida L.G.P."/>
            <person name="de Almeida R."/>
            <person name="Alves-Gomes J.A."/>
            <person name="Andrade E.M."/>
            <person name="Araripe J."/>
            <person name="de Araujo M.F.F."/>
            <person name="Astolfi-Filho S."/>
            <person name="Azevedo V."/>
            <person name="Baptista A.J."/>
            <person name="Bataus L.A.M."/>
            <person name="Batista J.S."/>
            <person name="Belo A."/>
            <person name="van den Berg C."/>
            <person name="Bogo M."/>
            <person name="Bonatto S."/>
            <person name="Bordignon J."/>
            <person name="Brigido M.M."/>
            <person name="Brito C.A."/>
            <person name="Brocchi M."/>
            <person name="Burity H.A."/>
            <person name="Camargo A.A."/>
            <person name="Cardoso D.D.P."/>
            <person name="Carneiro N.P."/>
            <person name="Carraro D.M."/>
            <person name="Carvalho C.M.B."/>
            <person name="Cascardo J.C.M."/>
            <person name="Cavada B.S."/>
            <person name="Chueire L.M.O."/>
            <person name="Creczynski-Pasa T.B."/>
            <person name="Cunha-Junior N.C."/>
            <person name="Fagundes N."/>
            <person name="Falcao C.L."/>
            <person name="Fantinatti F."/>
            <person name="Farias I.P."/>
            <person name="Felipe M.S.S."/>
            <person name="Ferrari L.P."/>
            <person name="Ferro J.A."/>
            <person name="Ferro M.I.T."/>
            <person name="Franco G.R."/>
            <person name="Freitas N.S.A."/>
            <person name="Furlan L.R."/>
            <person name="Gazzinelli R.T."/>
            <person name="Gomes E.A."/>
            <person name="Goncalves P.R."/>
            <person name="Grangeiro T.B."/>
            <person name="Grattapaglia D."/>
            <person name="Grisard E.C."/>
            <person name="Hanna E.S."/>
            <person name="Jardim S.N."/>
            <person name="Laurino J."/>
            <person name="Leoi L.C.T."/>
            <person name="Lima L.F.A."/>
            <person name="Loureiro M.F."/>
            <person name="Lyra M.C.C.P."/>
            <person name="Madeira H.M.F."/>
            <person name="Manfio G.P."/>
            <person name="Maranhao A.Q."/>
            <person name="Martins W.S."/>
            <person name="di Mauro S.M.Z."/>
            <person name="de Medeiros S.R.B."/>
            <person name="Meissner R.V."/>
            <person name="Moreira M.A.M."/>
            <person name="Nascimento F.F."/>
            <person name="Nicolas M.F."/>
            <person name="Oliveira J.G."/>
            <person name="Oliveira S.C."/>
            <person name="Paixao R.F.C."/>
            <person name="Parente J.A."/>
            <person name="Pedrosa F.O."/>
            <person name="Pena S.D.J."/>
            <person name="Pereira J.O."/>
            <person name="Pereira M."/>
            <person name="Pinto L.S.R.C."/>
            <person name="Pinto L.S."/>
            <person name="Porto J.I.R."/>
            <person name="Potrich D.P."/>
            <person name="Ramalho-Neto C.E."/>
            <person name="Reis A.M.M."/>
            <person name="Rigo L.U."/>
            <person name="Rondinelli E."/>
            <person name="Santos E.B.P."/>
            <person name="Santos F.R."/>
            <person name="Schneider M.P.C."/>
            <person name="Seuanez H.N."/>
            <person name="Silva A.M.R."/>
            <person name="da Silva A.L.C."/>
            <person name="Silva D.W."/>
            <person name="Silva R."/>
            <person name="Simoes I.C."/>
            <person name="Simon D."/>
            <person name="Soares C.M.A."/>
            <person name="Soares R.B.A."/>
            <person name="Souza E.M."/>
            <person name="Souza K.R.L."/>
            <person name="Souza R.C."/>
            <person name="Steffens M.B.R."/>
            <person name="Steindel M."/>
            <person name="Teixeira S.R."/>
            <person name="Urmenyi T."/>
            <person name="Vettore A."/>
            <person name="Wassem R."/>
            <person name="Zaha A."/>
            <person name="Simpson A.J.G."/>
        </authorList>
    </citation>
    <scope>NUCLEOTIDE SEQUENCE [LARGE SCALE GENOMIC DNA]</scope>
    <source>
        <strain>ATCC 12472 / DSM 30191 / JCM 1249 / CCUG 213 / NBRC 12614 / NCIMB 9131 / NCTC 9757 / MK</strain>
    </source>
</reference>
<name>FABZ_CHRVO</name>
<keyword id="KW-0963">Cytoplasm</keyword>
<keyword id="KW-0441">Lipid A biosynthesis</keyword>
<keyword id="KW-0444">Lipid biosynthesis</keyword>
<keyword id="KW-0443">Lipid metabolism</keyword>
<keyword id="KW-0456">Lyase</keyword>
<keyword id="KW-1185">Reference proteome</keyword>
<feature type="chain" id="PRO_0000091665" description="3-hydroxyacyl-[acyl-carrier-protein] dehydratase FabZ">
    <location>
        <begin position="1"/>
        <end position="150"/>
    </location>
</feature>
<feature type="active site" evidence="1">
    <location>
        <position position="54"/>
    </location>
</feature>
<organism>
    <name type="scientific">Chromobacterium violaceum (strain ATCC 12472 / DSM 30191 / JCM 1249 / CCUG 213 / NBRC 12614 / NCIMB 9131 / NCTC 9757 / MK)</name>
    <dbReference type="NCBI Taxonomy" id="243365"/>
    <lineage>
        <taxon>Bacteria</taxon>
        <taxon>Pseudomonadati</taxon>
        <taxon>Pseudomonadota</taxon>
        <taxon>Betaproteobacteria</taxon>
        <taxon>Neisseriales</taxon>
        <taxon>Chromobacteriaceae</taxon>
        <taxon>Chromobacterium</taxon>
    </lineage>
</organism>
<dbReference type="EC" id="4.2.1.59" evidence="1"/>
<dbReference type="EMBL" id="AE016825">
    <property type="protein sequence ID" value="AAQ59880.1"/>
    <property type="molecule type" value="Genomic_DNA"/>
</dbReference>
<dbReference type="RefSeq" id="WP_011135755.1">
    <property type="nucleotide sequence ID" value="NC_005085.1"/>
</dbReference>
<dbReference type="SMR" id="Q7NVY3"/>
<dbReference type="STRING" id="243365.CV_2207"/>
<dbReference type="GeneID" id="66367817"/>
<dbReference type="KEGG" id="cvi:CV_2207"/>
<dbReference type="eggNOG" id="COG0764">
    <property type="taxonomic scope" value="Bacteria"/>
</dbReference>
<dbReference type="HOGENOM" id="CLU_078912_1_0_4"/>
<dbReference type="OrthoDB" id="9772788at2"/>
<dbReference type="Proteomes" id="UP000001424">
    <property type="component" value="Chromosome"/>
</dbReference>
<dbReference type="GO" id="GO:0005737">
    <property type="term" value="C:cytoplasm"/>
    <property type="evidence" value="ECO:0007669"/>
    <property type="project" value="UniProtKB-SubCell"/>
</dbReference>
<dbReference type="GO" id="GO:0016020">
    <property type="term" value="C:membrane"/>
    <property type="evidence" value="ECO:0007669"/>
    <property type="project" value="GOC"/>
</dbReference>
<dbReference type="GO" id="GO:0019171">
    <property type="term" value="F:(3R)-hydroxyacyl-[acyl-carrier-protein] dehydratase activity"/>
    <property type="evidence" value="ECO:0007669"/>
    <property type="project" value="UniProtKB-EC"/>
</dbReference>
<dbReference type="GO" id="GO:0006633">
    <property type="term" value="P:fatty acid biosynthetic process"/>
    <property type="evidence" value="ECO:0007669"/>
    <property type="project" value="UniProtKB-UniRule"/>
</dbReference>
<dbReference type="GO" id="GO:0009245">
    <property type="term" value="P:lipid A biosynthetic process"/>
    <property type="evidence" value="ECO:0007669"/>
    <property type="project" value="UniProtKB-UniRule"/>
</dbReference>
<dbReference type="CDD" id="cd01288">
    <property type="entry name" value="FabZ"/>
    <property type="match status" value="1"/>
</dbReference>
<dbReference type="FunFam" id="3.10.129.10:FF:000001">
    <property type="entry name" value="3-hydroxyacyl-[acyl-carrier-protein] dehydratase FabZ"/>
    <property type="match status" value="1"/>
</dbReference>
<dbReference type="Gene3D" id="3.10.129.10">
    <property type="entry name" value="Hotdog Thioesterase"/>
    <property type="match status" value="1"/>
</dbReference>
<dbReference type="HAMAP" id="MF_00406">
    <property type="entry name" value="FabZ"/>
    <property type="match status" value="1"/>
</dbReference>
<dbReference type="InterPro" id="IPR013114">
    <property type="entry name" value="FabA_FabZ"/>
</dbReference>
<dbReference type="InterPro" id="IPR010084">
    <property type="entry name" value="FabZ"/>
</dbReference>
<dbReference type="InterPro" id="IPR029069">
    <property type="entry name" value="HotDog_dom_sf"/>
</dbReference>
<dbReference type="NCBIfam" id="TIGR01750">
    <property type="entry name" value="fabZ"/>
    <property type="match status" value="1"/>
</dbReference>
<dbReference type="NCBIfam" id="NF000582">
    <property type="entry name" value="PRK00006.1"/>
    <property type="match status" value="1"/>
</dbReference>
<dbReference type="PANTHER" id="PTHR30272">
    <property type="entry name" value="3-HYDROXYACYL-[ACYL-CARRIER-PROTEIN] DEHYDRATASE"/>
    <property type="match status" value="1"/>
</dbReference>
<dbReference type="PANTHER" id="PTHR30272:SF1">
    <property type="entry name" value="3-HYDROXYACYL-[ACYL-CARRIER-PROTEIN] DEHYDRATASE"/>
    <property type="match status" value="1"/>
</dbReference>
<dbReference type="Pfam" id="PF07977">
    <property type="entry name" value="FabA"/>
    <property type="match status" value="1"/>
</dbReference>
<dbReference type="SUPFAM" id="SSF54637">
    <property type="entry name" value="Thioesterase/thiol ester dehydrase-isomerase"/>
    <property type="match status" value="1"/>
</dbReference>
<comment type="function">
    <text evidence="1">Involved in unsaturated fatty acids biosynthesis. Catalyzes the dehydration of short chain beta-hydroxyacyl-ACPs and long chain saturated and unsaturated beta-hydroxyacyl-ACPs.</text>
</comment>
<comment type="catalytic activity">
    <reaction evidence="1">
        <text>a (3R)-hydroxyacyl-[ACP] = a (2E)-enoyl-[ACP] + H2O</text>
        <dbReference type="Rhea" id="RHEA:13097"/>
        <dbReference type="Rhea" id="RHEA-COMP:9925"/>
        <dbReference type="Rhea" id="RHEA-COMP:9945"/>
        <dbReference type="ChEBI" id="CHEBI:15377"/>
        <dbReference type="ChEBI" id="CHEBI:78784"/>
        <dbReference type="ChEBI" id="CHEBI:78827"/>
        <dbReference type="EC" id="4.2.1.59"/>
    </reaction>
</comment>
<comment type="subcellular location">
    <subcellularLocation>
        <location evidence="1">Cytoplasm</location>
    </subcellularLocation>
</comment>
<comment type="similarity">
    <text evidence="1">Belongs to the thioester dehydratase family. FabZ subfamily.</text>
</comment>
<sequence>MSEHAVSIDVREIMRCLPHRYPFLLVDRVTEMEPNVRIKALKNVTINEPFFVGHFEQYPVMPGVLIIEALAQAAGILAIKSQGERLENELYFFVGIDNARFKRQVVPGDQLVFEVTQMTVKRGIGKYAARALVDGQVACEAEIMCARREV</sequence>
<protein>
    <recommendedName>
        <fullName evidence="1">3-hydroxyacyl-[acyl-carrier-protein] dehydratase FabZ</fullName>
        <ecNumber evidence="1">4.2.1.59</ecNumber>
    </recommendedName>
    <alternativeName>
        <fullName evidence="1">(3R)-hydroxymyristoyl-[acyl-carrier-protein] dehydratase</fullName>
        <shortName evidence="1">(3R)-hydroxymyristoyl-ACP dehydrase</shortName>
    </alternativeName>
    <alternativeName>
        <fullName evidence="1">Beta-hydroxyacyl-ACP dehydratase</fullName>
    </alternativeName>
</protein>
<proteinExistence type="inferred from homology"/>
<gene>
    <name evidence="1" type="primary">fabZ</name>
    <name type="ordered locus">CV_2207</name>
</gene>